<comment type="function">
    <text evidence="1">Required for the timely initiation of chromosomal replication via direct interactions with the DnaA initiator protein.</text>
</comment>
<comment type="subunit">
    <text evidence="1">Homotetramer; dimer of dimers.</text>
</comment>
<comment type="similarity">
    <text evidence="1">Belongs to the SIS family. DiaA subfamily.</text>
</comment>
<keyword id="KW-0235">DNA replication</keyword>
<organism>
    <name type="scientific">Salmonella newport (strain SL254)</name>
    <dbReference type="NCBI Taxonomy" id="423368"/>
    <lineage>
        <taxon>Bacteria</taxon>
        <taxon>Pseudomonadati</taxon>
        <taxon>Pseudomonadota</taxon>
        <taxon>Gammaproteobacteria</taxon>
        <taxon>Enterobacterales</taxon>
        <taxon>Enterobacteriaceae</taxon>
        <taxon>Salmonella</taxon>
    </lineage>
</organism>
<reference key="1">
    <citation type="journal article" date="2011" name="J. Bacteriol.">
        <title>Comparative genomics of 28 Salmonella enterica isolates: evidence for CRISPR-mediated adaptive sublineage evolution.</title>
        <authorList>
            <person name="Fricke W.F."/>
            <person name="Mammel M.K."/>
            <person name="McDermott P.F."/>
            <person name="Tartera C."/>
            <person name="White D.G."/>
            <person name="Leclerc J.E."/>
            <person name="Ravel J."/>
            <person name="Cebula T.A."/>
        </authorList>
    </citation>
    <scope>NUCLEOTIDE SEQUENCE [LARGE SCALE GENOMIC DNA]</scope>
    <source>
        <strain>SL254</strain>
    </source>
</reference>
<gene>
    <name evidence="1" type="primary">diaA</name>
    <name type="ordered locus">SNSL254_A3524</name>
</gene>
<dbReference type="EMBL" id="CP001113">
    <property type="protein sequence ID" value="ACF64963.1"/>
    <property type="molecule type" value="Genomic_DNA"/>
</dbReference>
<dbReference type="RefSeq" id="WP_000893481.1">
    <property type="nucleotide sequence ID" value="NZ_CCMR01000001.1"/>
</dbReference>
<dbReference type="SMR" id="B4T6Y1"/>
<dbReference type="GeneID" id="66757607"/>
<dbReference type="KEGG" id="see:SNSL254_A3524"/>
<dbReference type="HOGENOM" id="CLU_080999_3_1_6"/>
<dbReference type="Proteomes" id="UP000008824">
    <property type="component" value="Chromosome"/>
</dbReference>
<dbReference type="GO" id="GO:0097367">
    <property type="term" value="F:carbohydrate derivative binding"/>
    <property type="evidence" value="ECO:0007669"/>
    <property type="project" value="InterPro"/>
</dbReference>
<dbReference type="GO" id="GO:1901135">
    <property type="term" value="P:carbohydrate derivative metabolic process"/>
    <property type="evidence" value="ECO:0007669"/>
    <property type="project" value="InterPro"/>
</dbReference>
<dbReference type="GO" id="GO:0006260">
    <property type="term" value="P:DNA replication"/>
    <property type="evidence" value="ECO:0007669"/>
    <property type="project" value="UniProtKB-UniRule"/>
</dbReference>
<dbReference type="CDD" id="cd05006">
    <property type="entry name" value="SIS_GmhA"/>
    <property type="match status" value="1"/>
</dbReference>
<dbReference type="FunFam" id="3.40.50.10490:FF:000006">
    <property type="entry name" value="DnaA initiator-associating protein DiaA"/>
    <property type="match status" value="1"/>
</dbReference>
<dbReference type="Gene3D" id="3.40.50.10490">
    <property type="entry name" value="Glucose-6-phosphate isomerase like protein, domain 1"/>
    <property type="match status" value="1"/>
</dbReference>
<dbReference type="HAMAP" id="MF_01157">
    <property type="entry name" value="SIS_DiaA"/>
    <property type="match status" value="1"/>
</dbReference>
<dbReference type="InterPro" id="IPR023070">
    <property type="entry name" value="DiaA"/>
</dbReference>
<dbReference type="InterPro" id="IPR035461">
    <property type="entry name" value="GmhA/DiaA"/>
</dbReference>
<dbReference type="InterPro" id="IPR001347">
    <property type="entry name" value="SIS_dom"/>
</dbReference>
<dbReference type="InterPro" id="IPR046348">
    <property type="entry name" value="SIS_dom_sf"/>
</dbReference>
<dbReference type="InterPro" id="IPR050099">
    <property type="entry name" value="SIS_GmhA/DiaA_subfam"/>
</dbReference>
<dbReference type="NCBIfam" id="NF008138">
    <property type="entry name" value="PRK10886.1"/>
    <property type="match status" value="1"/>
</dbReference>
<dbReference type="PANTHER" id="PTHR30390:SF6">
    <property type="entry name" value="DNAA INITIATOR-ASSOCIATING PROTEIN DIAA"/>
    <property type="match status" value="1"/>
</dbReference>
<dbReference type="PANTHER" id="PTHR30390">
    <property type="entry name" value="SEDOHEPTULOSE 7-PHOSPHATE ISOMERASE / DNAA INITIATOR-ASSOCIATING FACTOR FOR REPLICATION INITIATION"/>
    <property type="match status" value="1"/>
</dbReference>
<dbReference type="Pfam" id="PF13580">
    <property type="entry name" value="SIS_2"/>
    <property type="match status" value="1"/>
</dbReference>
<dbReference type="SUPFAM" id="SSF53697">
    <property type="entry name" value="SIS domain"/>
    <property type="match status" value="1"/>
</dbReference>
<dbReference type="PROSITE" id="PS51464">
    <property type="entry name" value="SIS"/>
    <property type="match status" value="1"/>
</dbReference>
<protein>
    <recommendedName>
        <fullName evidence="1">DnaA initiator-associating protein DiaA</fullName>
    </recommendedName>
</protein>
<sequence length="196" mass="21109">MLERIKVCFTESIQTQIAAAEALPDAISRAAMTLVHSLLNGNKILCCGNGTSAANAQHFAASMINRFETERPSLPAIALNTDNVVLTAIANDRLHDEVYAKQVRALGHAGDVLLAISTRGNSRDIVKAVEAAVTRDMTIVALTGYDGGELAGLLGPQDVEIRIPSHHSARIQEMHMLTVNCLCDLIDNTLFPHQDD</sequence>
<feature type="chain" id="PRO_1000137800" description="DnaA initiator-associating protein DiaA">
    <location>
        <begin position="1"/>
        <end position="196"/>
    </location>
</feature>
<feature type="domain" description="SIS" evidence="1">
    <location>
        <begin position="34"/>
        <end position="196"/>
    </location>
</feature>
<name>DIAA_SALNS</name>
<evidence type="ECO:0000255" key="1">
    <source>
        <dbReference type="HAMAP-Rule" id="MF_01157"/>
    </source>
</evidence>
<accession>B4T6Y1</accession>
<proteinExistence type="inferred from homology"/>